<feature type="chain" id="PRO_0000114311" description="Chromosomal replication initiator protein DnaA">
    <location>
        <begin position="1"/>
        <end position="462"/>
    </location>
</feature>
<feature type="region of interest" description="Domain I, interacts with DnaA modulators" evidence="1">
    <location>
        <begin position="1"/>
        <end position="83"/>
    </location>
</feature>
<feature type="region of interest" description="Domain II" evidence="1">
    <location>
        <begin position="83"/>
        <end position="125"/>
    </location>
</feature>
<feature type="region of interest" description="Disordered" evidence="2">
    <location>
        <begin position="104"/>
        <end position="125"/>
    </location>
</feature>
<feature type="region of interest" description="Domain III, AAA+ region" evidence="1">
    <location>
        <begin position="126"/>
        <end position="342"/>
    </location>
</feature>
<feature type="region of interest" description="Domain IV, binds dsDNA" evidence="1">
    <location>
        <begin position="343"/>
        <end position="462"/>
    </location>
</feature>
<feature type="compositionally biased region" description="Polar residues" evidence="2">
    <location>
        <begin position="112"/>
        <end position="125"/>
    </location>
</feature>
<feature type="binding site" evidence="1">
    <location>
        <position position="170"/>
    </location>
    <ligand>
        <name>ATP</name>
        <dbReference type="ChEBI" id="CHEBI:30616"/>
    </ligand>
</feature>
<feature type="binding site" evidence="1">
    <location>
        <position position="172"/>
    </location>
    <ligand>
        <name>ATP</name>
        <dbReference type="ChEBI" id="CHEBI:30616"/>
    </ligand>
</feature>
<feature type="binding site" evidence="1">
    <location>
        <position position="173"/>
    </location>
    <ligand>
        <name>ATP</name>
        <dbReference type="ChEBI" id="CHEBI:30616"/>
    </ligand>
</feature>
<feature type="binding site" evidence="1">
    <location>
        <position position="174"/>
    </location>
    <ligand>
        <name>ATP</name>
        <dbReference type="ChEBI" id="CHEBI:30616"/>
    </ligand>
</feature>
<comment type="function">
    <text evidence="1">Plays an essential role in the initiation and regulation of chromosomal replication. ATP-DnaA binds to the origin of replication (oriC) to initiate formation of the DNA replication initiation complex once per cell cycle. Binds the DnaA box (a 9 base pair repeat at the origin) and separates the double-stranded (ds)DNA. Forms a right-handed helical filament on oriC DNA; dsDNA binds to the exterior of the filament while single-stranded (ss)DNA is stabiized in the filament's interior. The ATP-DnaA-oriC complex binds and stabilizes one strand of the AT-rich DNA unwinding element (DUE), permitting loading of DNA polymerase. After initiation quickly degrades to an ADP-DnaA complex that is not apt for DNA replication. Binds acidic phospholipids.</text>
</comment>
<comment type="subunit">
    <text evidence="1">Oligomerizes as a right-handed, spiral filament on DNA at oriC.</text>
</comment>
<comment type="subcellular location">
    <subcellularLocation>
        <location evidence="1">Cytoplasm</location>
    </subcellularLocation>
</comment>
<comment type="domain">
    <text evidence="1">Domain I is involved in oligomerization and binding regulators, domain II is flexibile and of varying length in different bacteria, domain III forms the AAA+ region, while domain IV binds dsDNA.</text>
</comment>
<comment type="similarity">
    <text evidence="1">Belongs to the DnaA family.</text>
</comment>
<proteinExistence type="inferred from homology"/>
<evidence type="ECO:0000255" key="1">
    <source>
        <dbReference type="HAMAP-Rule" id="MF_00377"/>
    </source>
</evidence>
<evidence type="ECO:0000256" key="2">
    <source>
        <dbReference type="SAM" id="MobiDB-lite"/>
    </source>
</evidence>
<dbReference type="EMBL" id="BX936398">
    <property type="protein sequence ID" value="CAH23181.1"/>
    <property type="molecule type" value="Genomic_DNA"/>
</dbReference>
<dbReference type="RefSeq" id="WP_002220732.1">
    <property type="nucleotide sequence ID" value="NZ_CP009712.1"/>
</dbReference>
<dbReference type="SMR" id="Q663T2"/>
<dbReference type="GeneID" id="57974625"/>
<dbReference type="KEGG" id="ypo:BZ17_2633"/>
<dbReference type="KEGG" id="yps:YPTB3943"/>
<dbReference type="PATRIC" id="fig|273123.14.peg.2760"/>
<dbReference type="Proteomes" id="UP000001011">
    <property type="component" value="Chromosome"/>
</dbReference>
<dbReference type="GO" id="GO:0005737">
    <property type="term" value="C:cytoplasm"/>
    <property type="evidence" value="ECO:0007669"/>
    <property type="project" value="UniProtKB-SubCell"/>
</dbReference>
<dbReference type="GO" id="GO:0005886">
    <property type="term" value="C:plasma membrane"/>
    <property type="evidence" value="ECO:0007669"/>
    <property type="project" value="TreeGrafter"/>
</dbReference>
<dbReference type="GO" id="GO:0005524">
    <property type="term" value="F:ATP binding"/>
    <property type="evidence" value="ECO:0007669"/>
    <property type="project" value="UniProtKB-UniRule"/>
</dbReference>
<dbReference type="GO" id="GO:0016887">
    <property type="term" value="F:ATP hydrolysis activity"/>
    <property type="evidence" value="ECO:0007669"/>
    <property type="project" value="InterPro"/>
</dbReference>
<dbReference type="GO" id="GO:0003688">
    <property type="term" value="F:DNA replication origin binding"/>
    <property type="evidence" value="ECO:0007669"/>
    <property type="project" value="UniProtKB-UniRule"/>
</dbReference>
<dbReference type="GO" id="GO:0008289">
    <property type="term" value="F:lipid binding"/>
    <property type="evidence" value="ECO:0007669"/>
    <property type="project" value="UniProtKB-KW"/>
</dbReference>
<dbReference type="GO" id="GO:0006270">
    <property type="term" value="P:DNA replication initiation"/>
    <property type="evidence" value="ECO:0007669"/>
    <property type="project" value="UniProtKB-UniRule"/>
</dbReference>
<dbReference type="GO" id="GO:0006275">
    <property type="term" value="P:regulation of DNA replication"/>
    <property type="evidence" value="ECO:0007669"/>
    <property type="project" value="UniProtKB-UniRule"/>
</dbReference>
<dbReference type="CDD" id="cd00009">
    <property type="entry name" value="AAA"/>
    <property type="match status" value="1"/>
</dbReference>
<dbReference type="CDD" id="cd06571">
    <property type="entry name" value="Bac_DnaA_C"/>
    <property type="match status" value="1"/>
</dbReference>
<dbReference type="FunFam" id="1.10.1750.10:FF:000001">
    <property type="entry name" value="Chromosomal replication initiator protein DnaA"/>
    <property type="match status" value="1"/>
</dbReference>
<dbReference type="FunFam" id="1.10.8.60:FF:000003">
    <property type="entry name" value="Chromosomal replication initiator protein DnaA"/>
    <property type="match status" value="1"/>
</dbReference>
<dbReference type="FunFam" id="3.30.300.180:FF:000001">
    <property type="entry name" value="Chromosomal replication initiator protein DnaA"/>
    <property type="match status" value="1"/>
</dbReference>
<dbReference type="FunFam" id="3.40.50.300:FF:000103">
    <property type="entry name" value="Chromosomal replication initiator protein DnaA"/>
    <property type="match status" value="1"/>
</dbReference>
<dbReference type="Gene3D" id="1.10.1750.10">
    <property type="match status" value="1"/>
</dbReference>
<dbReference type="Gene3D" id="1.10.8.60">
    <property type="match status" value="1"/>
</dbReference>
<dbReference type="Gene3D" id="3.30.300.180">
    <property type="match status" value="1"/>
</dbReference>
<dbReference type="Gene3D" id="3.40.50.300">
    <property type="entry name" value="P-loop containing nucleotide triphosphate hydrolases"/>
    <property type="match status" value="1"/>
</dbReference>
<dbReference type="HAMAP" id="MF_00377">
    <property type="entry name" value="DnaA_bact"/>
    <property type="match status" value="1"/>
</dbReference>
<dbReference type="InterPro" id="IPR003593">
    <property type="entry name" value="AAA+_ATPase"/>
</dbReference>
<dbReference type="InterPro" id="IPR001957">
    <property type="entry name" value="Chromosome_initiator_DnaA"/>
</dbReference>
<dbReference type="InterPro" id="IPR020591">
    <property type="entry name" value="Chromosome_initiator_DnaA-like"/>
</dbReference>
<dbReference type="InterPro" id="IPR018312">
    <property type="entry name" value="Chromosome_initiator_DnaA_CS"/>
</dbReference>
<dbReference type="InterPro" id="IPR013159">
    <property type="entry name" value="DnaA_C"/>
</dbReference>
<dbReference type="InterPro" id="IPR013317">
    <property type="entry name" value="DnaA_dom"/>
</dbReference>
<dbReference type="InterPro" id="IPR024633">
    <property type="entry name" value="DnaA_N_dom"/>
</dbReference>
<dbReference type="InterPro" id="IPR038454">
    <property type="entry name" value="DnaA_N_sf"/>
</dbReference>
<dbReference type="InterPro" id="IPR027417">
    <property type="entry name" value="P-loop_NTPase"/>
</dbReference>
<dbReference type="InterPro" id="IPR010921">
    <property type="entry name" value="Trp_repressor/repl_initiator"/>
</dbReference>
<dbReference type="NCBIfam" id="TIGR00362">
    <property type="entry name" value="DnaA"/>
    <property type="match status" value="1"/>
</dbReference>
<dbReference type="PANTHER" id="PTHR30050">
    <property type="entry name" value="CHROMOSOMAL REPLICATION INITIATOR PROTEIN DNAA"/>
    <property type="match status" value="1"/>
</dbReference>
<dbReference type="PANTHER" id="PTHR30050:SF2">
    <property type="entry name" value="CHROMOSOMAL REPLICATION INITIATOR PROTEIN DNAA"/>
    <property type="match status" value="1"/>
</dbReference>
<dbReference type="Pfam" id="PF00308">
    <property type="entry name" value="Bac_DnaA"/>
    <property type="match status" value="1"/>
</dbReference>
<dbReference type="Pfam" id="PF08299">
    <property type="entry name" value="Bac_DnaA_C"/>
    <property type="match status" value="1"/>
</dbReference>
<dbReference type="Pfam" id="PF11638">
    <property type="entry name" value="DnaA_N"/>
    <property type="match status" value="1"/>
</dbReference>
<dbReference type="PRINTS" id="PR00051">
    <property type="entry name" value="DNAA"/>
</dbReference>
<dbReference type="SMART" id="SM00382">
    <property type="entry name" value="AAA"/>
    <property type="match status" value="1"/>
</dbReference>
<dbReference type="SMART" id="SM00760">
    <property type="entry name" value="Bac_DnaA_C"/>
    <property type="match status" value="1"/>
</dbReference>
<dbReference type="SUPFAM" id="SSF52540">
    <property type="entry name" value="P-loop containing nucleoside triphosphate hydrolases"/>
    <property type="match status" value="1"/>
</dbReference>
<dbReference type="SUPFAM" id="SSF48295">
    <property type="entry name" value="TrpR-like"/>
    <property type="match status" value="1"/>
</dbReference>
<dbReference type="PROSITE" id="PS01008">
    <property type="entry name" value="DNAA"/>
    <property type="match status" value="1"/>
</dbReference>
<name>DNAA_YERPS</name>
<accession>Q663T2</accession>
<protein>
    <recommendedName>
        <fullName evidence="1">Chromosomal replication initiator protein DnaA</fullName>
    </recommendedName>
</protein>
<keyword id="KW-0067">ATP-binding</keyword>
<keyword id="KW-0963">Cytoplasm</keyword>
<keyword id="KW-0235">DNA replication</keyword>
<keyword id="KW-0238">DNA-binding</keyword>
<keyword id="KW-0446">Lipid-binding</keyword>
<keyword id="KW-0547">Nucleotide-binding</keyword>
<sequence>MSLSLWQQCLARLQDELPATEFSMWIRPLQAELSDNTLALYAPNRFVLDWVRDKYLNNINGLLNDFCGTEVPLLRFEVGSKPAARAHNNPVTASVSAPVAPVTRSAPMRPSWDNSPAQPELSYRSNVNPKHTFDNFVEGKSNQLARAAARQVADNPGGAYNPLFLYGGTGLGKTHLLHAVGNGIMARKANAKVVYMHSERFVQDMVKALQNNAIEEFKRYYRSVDALLIDDIQFFANKERSQEEFFHTFNALLEGNQQIILTSDRYPKEINGVEDRLKSRFGWGLTVAIEPPELETRVAILMKKADENDIRLPGEVAFFIAKRLRSNVRELEGALNRVIANANFTGRAITIDFVREALRDLLALQEKLVTIDNIQKTVAEYYKIKVADLLSKRRSRSVARPRQMAMALAKELTNHSLPEIGDAFGGRDHTTVLHACRKIEQLREESHDIKEDFSNLIRTLSS</sequence>
<organism>
    <name type="scientific">Yersinia pseudotuberculosis serotype I (strain IP32953)</name>
    <dbReference type="NCBI Taxonomy" id="273123"/>
    <lineage>
        <taxon>Bacteria</taxon>
        <taxon>Pseudomonadati</taxon>
        <taxon>Pseudomonadota</taxon>
        <taxon>Gammaproteobacteria</taxon>
        <taxon>Enterobacterales</taxon>
        <taxon>Yersiniaceae</taxon>
        <taxon>Yersinia</taxon>
    </lineage>
</organism>
<gene>
    <name evidence="1" type="primary">dnaA</name>
    <name type="ordered locus">YPTB3943</name>
</gene>
<reference key="1">
    <citation type="journal article" date="2004" name="Proc. Natl. Acad. Sci. U.S.A.">
        <title>Insights into the evolution of Yersinia pestis through whole-genome comparison with Yersinia pseudotuberculosis.</title>
        <authorList>
            <person name="Chain P.S.G."/>
            <person name="Carniel E."/>
            <person name="Larimer F.W."/>
            <person name="Lamerdin J."/>
            <person name="Stoutland P.O."/>
            <person name="Regala W.M."/>
            <person name="Georgescu A.M."/>
            <person name="Vergez L.M."/>
            <person name="Land M.L."/>
            <person name="Motin V.L."/>
            <person name="Brubaker R.R."/>
            <person name="Fowler J."/>
            <person name="Hinnebusch J."/>
            <person name="Marceau M."/>
            <person name="Medigue C."/>
            <person name="Simonet M."/>
            <person name="Chenal-Francisque V."/>
            <person name="Souza B."/>
            <person name="Dacheux D."/>
            <person name="Elliott J.M."/>
            <person name="Derbise A."/>
            <person name="Hauser L.J."/>
            <person name="Garcia E."/>
        </authorList>
    </citation>
    <scope>NUCLEOTIDE SEQUENCE [LARGE SCALE GENOMIC DNA]</scope>
    <source>
        <strain>IP32953</strain>
    </source>
</reference>